<feature type="chain" id="PRO_0000392210" description="Nesprin-2">
    <location>
        <begin position="1"/>
        <end position="6874"/>
    </location>
</feature>
<feature type="topological domain" description="Cytoplasmic" evidence="5">
    <location>
        <begin position="1"/>
        <end position="6823"/>
    </location>
</feature>
<feature type="transmembrane region" description="Helical; Anchor for type IV membrane protein" evidence="5">
    <location>
        <begin position="6824"/>
        <end position="6844"/>
    </location>
</feature>
<feature type="topological domain" description="Perinuclear space" evidence="5">
    <location>
        <begin position="6845"/>
        <end position="6874"/>
    </location>
</feature>
<feature type="domain" description="Calponin-homology (CH) 1" evidence="4">
    <location>
        <begin position="31"/>
        <end position="136"/>
    </location>
</feature>
<feature type="domain" description="Calponin-homology (CH) 2" evidence="4">
    <location>
        <begin position="183"/>
        <end position="288"/>
    </location>
</feature>
<feature type="repeat" description="Spectrin 1">
    <location>
        <begin position="299"/>
        <end position="380"/>
    </location>
</feature>
<feature type="repeat" description="Spectrin 2">
    <location>
        <begin position="381"/>
        <end position="474"/>
    </location>
</feature>
<feature type="repeat" description="Spectrin 3">
    <location>
        <begin position="475"/>
        <end position="577"/>
    </location>
</feature>
<feature type="repeat" description="Spectrin 4">
    <location>
        <begin position="578"/>
        <end position="680"/>
    </location>
</feature>
<feature type="repeat" description="Spectrin 5">
    <location>
        <begin position="727"/>
        <end position="834"/>
    </location>
</feature>
<feature type="repeat" description="Spectrin 6">
    <location>
        <begin position="835"/>
        <end position="928"/>
    </location>
</feature>
<feature type="repeat" description="Spectrin 7">
    <location>
        <begin position="929"/>
        <end position="1030"/>
    </location>
</feature>
<feature type="repeat" description="Spectrin 8">
    <location>
        <begin position="1120"/>
        <end position="1211"/>
    </location>
</feature>
<feature type="repeat" description="Spectrin 9">
    <location>
        <begin position="1262"/>
        <end position="1322"/>
    </location>
</feature>
<feature type="repeat" description="Spectrin 10">
    <location>
        <begin position="1323"/>
        <end position="1409"/>
    </location>
</feature>
<feature type="repeat" description="Spectrin 11">
    <location>
        <begin position="1410"/>
        <end position="1514"/>
    </location>
</feature>
<feature type="repeat" description="Spectrin 12">
    <location>
        <begin position="1515"/>
        <end position="1626"/>
    </location>
</feature>
<feature type="repeat" description="Spectrin 13">
    <location>
        <begin position="1627"/>
        <end position="1728"/>
    </location>
</feature>
<feature type="repeat" description="Spectrin 14">
    <location>
        <begin position="1729"/>
        <end position="1820"/>
    </location>
</feature>
<feature type="repeat" description="Spectrin 15">
    <location>
        <begin position="1821"/>
        <end position="1928"/>
    </location>
</feature>
<feature type="repeat" description="Spectrin 16">
    <location>
        <begin position="1929"/>
        <end position="2026"/>
    </location>
</feature>
<feature type="repeat" description="Spectrin 17">
    <location>
        <begin position="2027"/>
        <end position="2122"/>
    </location>
</feature>
<feature type="repeat" description="Spectrin 18">
    <location>
        <begin position="2123"/>
        <end position="2233"/>
    </location>
</feature>
<feature type="repeat" description="Spectrin 19">
    <location>
        <begin position="2234"/>
        <end position="2350"/>
    </location>
</feature>
<feature type="repeat" description="Spectrin 20">
    <location>
        <begin position="2422"/>
        <end position="2503"/>
    </location>
</feature>
<feature type="repeat" description="Spectrin 21">
    <location>
        <begin position="2504"/>
        <end position="2610"/>
    </location>
</feature>
<feature type="repeat" description="Spectrin 22">
    <location>
        <begin position="2611"/>
        <end position="2707"/>
    </location>
</feature>
<feature type="repeat" description="Spectrin 23">
    <location>
        <begin position="2708"/>
        <end position="2821"/>
    </location>
</feature>
<feature type="repeat" description="Spectrin 24">
    <location>
        <begin position="2822"/>
        <end position="2923"/>
    </location>
</feature>
<feature type="repeat" description="Spectrin 25">
    <location>
        <begin position="2924"/>
        <end position="3027"/>
    </location>
</feature>
<feature type="repeat" description="Spectrin 26">
    <location>
        <begin position="3028"/>
        <end position="3133"/>
    </location>
</feature>
<feature type="repeat" description="Spectrin 27">
    <location>
        <begin position="3134"/>
        <end position="3239"/>
    </location>
</feature>
<feature type="repeat" description="Spectrin 28">
    <location>
        <begin position="3240"/>
        <end position="3343"/>
    </location>
</feature>
<feature type="repeat" description="Spectrin 29">
    <location>
        <begin position="3344"/>
        <end position="3456"/>
    </location>
</feature>
<feature type="repeat" description="Spectrin 30">
    <location>
        <begin position="3457"/>
        <end position="3563"/>
    </location>
</feature>
<feature type="repeat" description="Spectrin 31">
    <location>
        <begin position="3564"/>
        <end position="3669"/>
    </location>
</feature>
<feature type="repeat" description="Spectrin 32">
    <location>
        <begin position="3670"/>
        <end position="3767"/>
    </location>
</feature>
<feature type="repeat" description="Spectrin 33">
    <location>
        <begin position="3768"/>
        <end position="3870"/>
    </location>
</feature>
<feature type="repeat" description="Spectrin 34">
    <location>
        <begin position="3871"/>
        <end position="3976"/>
    </location>
</feature>
<feature type="repeat" description="Spectrin 35">
    <location>
        <begin position="3977"/>
        <end position="4074"/>
    </location>
</feature>
<feature type="repeat" description="Spectrin 36">
    <location>
        <begin position="4218"/>
        <end position="4337"/>
    </location>
</feature>
<feature type="repeat" description="Spectrin 37">
    <location>
        <begin position="4507"/>
        <end position="4626"/>
    </location>
</feature>
<feature type="repeat" description="Spectrin 38">
    <location>
        <begin position="4627"/>
        <end position="4714"/>
    </location>
</feature>
<feature type="repeat" description="Spectrin 39">
    <location>
        <begin position="4715"/>
        <end position="4823"/>
    </location>
</feature>
<feature type="repeat" description="Spectrin 40">
    <location>
        <begin position="4824"/>
        <end position="4929"/>
    </location>
</feature>
<feature type="repeat" description="Spectrin 41">
    <location>
        <begin position="4930"/>
        <end position="5037"/>
    </location>
</feature>
<feature type="repeat" description="Spectrin 42">
    <location>
        <begin position="5038"/>
        <end position="5150"/>
    </location>
</feature>
<feature type="repeat" description="Spectrin 43">
    <location>
        <begin position="5151"/>
        <end position="5252"/>
    </location>
</feature>
<feature type="repeat" description="Spectrin 44">
    <location>
        <begin position="5253"/>
        <end position="5377"/>
    </location>
</feature>
<feature type="repeat" description="Spectrin 45">
    <location>
        <begin position="5378"/>
        <end position="5473"/>
    </location>
</feature>
<feature type="repeat" description="Spectrin 46">
    <location>
        <begin position="5474"/>
        <end position="5576"/>
    </location>
</feature>
<feature type="repeat" description="Spectrin 47">
    <location>
        <begin position="5577"/>
        <end position="5691"/>
    </location>
</feature>
<feature type="repeat" description="Spectrin 48">
    <location>
        <begin position="5692"/>
        <end position="5786"/>
    </location>
</feature>
<feature type="repeat" description="Spectrin 49">
    <location>
        <begin position="5787"/>
        <end position="5894"/>
    </location>
</feature>
<feature type="repeat" description="Spectrin 50">
    <location>
        <begin position="5895"/>
        <end position="6004"/>
    </location>
</feature>
<feature type="repeat" description="Spectrin 51">
    <location>
        <begin position="6005"/>
        <end position="6122"/>
    </location>
</feature>
<feature type="repeat" description="Spectrin 52">
    <location>
        <begin position="6123"/>
        <end position="6230"/>
    </location>
</feature>
<feature type="repeat" description="Spectrin 53">
    <location>
        <begin position="6231"/>
        <end position="6342"/>
    </location>
</feature>
<feature type="repeat" description="Spectrin 54">
    <location>
        <begin position="6450"/>
        <end position="6534"/>
    </location>
</feature>
<feature type="repeat" description="Spectrin 55">
    <location>
        <begin position="6535"/>
        <end position="6650"/>
    </location>
</feature>
<feature type="repeat" description="Spectrin 56">
    <location>
        <begin position="6651"/>
        <end position="6767"/>
    </location>
</feature>
<feature type="domain" description="KASH" evidence="5">
    <location>
        <begin position="6815"/>
        <end position="6874"/>
    </location>
</feature>
<feature type="region of interest" description="Actin-binding">
    <location>
        <begin position="1"/>
        <end position="286"/>
    </location>
</feature>
<feature type="region of interest" description="Disordered" evidence="6">
    <location>
        <begin position="675"/>
        <end position="723"/>
    </location>
</feature>
<feature type="region of interest" description="Disordered" evidence="6">
    <location>
        <begin position="2338"/>
        <end position="2397"/>
    </location>
</feature>
<feature type="region of interest" description="Disordered" evidence="6">
    <location>
        <begin position="4062"/>
        <end position="4152"/>
    </location>
</feature>
<feature type="region of interest" description="Disordered" evidence="6">
    <location>
        <begin position="4171"/>
        <end position="4193"/>
    </location>
</feature>
<feature type="region of interest" description="Disordered" evidence="6">
    <location>
        <begin position="4326"/>
        <end position="4348"/>
    </location>
</feature>
<feature type="region of interest" description="Disordered" evidence="6">
    <location>
        <begin position="4401"/>
        <end position="4429"/>
    </location>
</feature>
<feature type="region of interest" description="Disordered" evidence="6">
    <location>
        <begin position="5435"/>
        <end position="5459"/>
    </location>
</feature>
<feature type="region of interest" description="Disordered" evidence="6">
    <location>
        <begin position="6336"/>
        <end position="6473"/>
    </location>
</feature>
<feature type="region of interest" description="Disordered" evidence="6">
    <location>
        <begin position="6790"/>
        <end position="6812"/>
    </location>
</feature>
<feature type="region of interest" description="Sufficient for interaction with SUN2" evidence="2">
    <location>
        <begin position="6861"/>
        <end position="6874"/>
    </location>
</feature>
<feature type="coiled-coil region" evidence="3">
    <location>
        <begin position="299"/>
        <end position="6767"/>
    </location>
</feature>
<feature type="compositionally biased region" description="Polar residues" evidence="6">
    <location>
        <begin position="681"/>
        <end position="692"/>
    </location>
</feature>
<feature type="compositionally biased region" description="Basic and acidic residues" evidence="6">
    <location>
        <begin position="704"/>
        <end position="714"/>
    </location>
</feature>
<feature type="compositionally biased region" description="Polar residues" evidence="6">
    <location>
        <begin position="2344"/>
        <end position="2354"/>
    </location>
</feature>
<feature type="compositionally biased region" description="Basic and acidic residues" evidence="6">
    <location>
        <begin position="4081"/>
        <end position="4091"/>
    </location>
</feature>
<feature type="compositionally biased region" description="Basic and acidic residues" evidence="6">
    <location>
        <begin position="4110"/>
        <end position="4122"/>
    </location>
</feature>
<feature type="compositionally biased region" description="Basic and acidic residues" evidence="6">
    <location>
        <begin position="4326"/>
        <end position="4345"/>
    </location>
</feature>
<feature type="compositionally biased region" description="Polar residues" evidence="6">
    <location>
        <begin position="4409"/>
        <end position="4429"/>
    </location>
</feature>
<feature type="compositionally biased region" description="Acidic residues" evidence="6">
    <location>
        <begin position="6341"/>
        <end position="6354"/>
    </location>
</feature>
<feature type="compositionally biased region" description="Basic and acidic residues" evidence="6">
    <location>
        <begin position="6355"/>
        <end position="6372"/>
    </location>
</feature>
<feature type="modified residue" description="Phosphoserine" evidence="17">
    <location>
        <position position="4096"/>
    </location>
</feature>
<feature type="modified residue" description="Phosphoserine" evidence="2">
    <location>
        <position position="5772"/>
    </location>
</feature>
<feature type="modified residue" description="Phosphoserine" evidence="2">
    <location>
        <position position="6348"/>
    </location>
</feature>
<feature type="modified residue" description="Phosphoserine" evidence="17">
    <location>
        <position position="6371"/>
    </location>
</feature>
<feature type="modified residue" description="Phosphoserine" evidence="17">
    <location>
        <position position="6400"/>
    </location>
</feature>
<feature type="modified residue" description="Phosphoserine" evidence="17">
    <location>
        <position position="6417"/>
    </location>
</feature>
<feature type="modified residue" description="Phosphoserine" evidence="17">
    <location>
        <position position="6418"/>
    </location>
</feature>
<feature type="modified residue" description="Phosphoserine" evidence="17">
    <location>
        <position position="6419"/>
    </location>
</feature>
<feature type="modified residue" description="Phosphoserine" evidence="2">
    <location>
        <position position="6448"/>
    </location>
</feature>
<feature type="disulfide bond" description="Interchain (with C-577 in SUN2); alternate" evidence="2">
    <location>
        <position position="6851"/>
    </location>
</feature>
<feature type="disulfide bond" description="Interchain (with C-759 in SUN1); alternate" evidence="2">
    <location>
        <position position="6851"/>
    </location>
</feature>
<feature type="splice variant" id="VSP_038799" description="In isoform 3." evidence="13">
    <location>
        <begin position="1"/>
        <end position="4994"/>
    </location>
</feature>
<feature type="splice variant" id="VSP_038800" description="In isoform 2." evidence="14">
    <original>INNVLGKNFIP</original>
    <variation>FVIVPVHKLCE</variation>
    <location>
        <begin position="472"/>
        <end position="482"/>
    </location>
</feature>
<feature type="splice variant" id="VSP_038801" description="In isoform 2." evidence="14">
    <location>
        <begin position="483"/>
        <end position="6874"/>
    </location>
</feature>
<feature type="splice variant" id="VSP_038802" description="In isoform 3." evidence="13">
    <original>SPRPRWTFL</original>
    <variation>FGV</variation>
    <location>
        <begin position="6781"/>
        <end position="6789"/>
    </location>
</feature>
<feature type="mutagenesis site" description="Impairs interaction with F-actin; when assocoated with A-131." evidence="10">
    <original>I</original>
    <variation>A</variation>
    <location>
        <position position="128"/>
    </location>
</feature>
<feature type="mutagenesis site" description="Impairs interaction with F-actin; when assocoated with A-128." evidence="10">
    <original>I</original>
    <variation>A</variation>
    <location>
        <position position="131"/>
    </location>
</feature>
<name>SYNE2_MOUSE</name>
<keyword id="KW-0009">Actin-binding</keyword>
<keyword id="KW-0025">Alternative splicing</keyword>
<keyword id="KW-1003">Cell membrane</keyword>
<keyword id="KW-0175">Coiled coil</keyword>
<keyword id="KW-0963">Cytoplasm</keyword>
<keyword id="KW-0206">Cytoskeleton</keyword>
<keyword id="KW-1015">Disulfide bond</keyword>
<keyword id="KW-0472">Membrane</keyword>
<keyword id="KW-0496">Mitochondrion</keyword>
<keyword id="KW-0539">Nucleus</keyword>
<keyword id="KW-0597">Phosphoprotein</keyword>
<keyword id="KW-1185">Reference proteome</keyword>
<keyword id="KW-0677">Repeat</keyword>
<keyword id="KW-0703">Sarcoplasmic reticulum</keyword>
<keyword id="KW-0812">Transmembrane</keyword>
<keyword id="KW-1133">Transmembrane helix</keyword>
<organism>
    <name type="scientific">Mus musculus</name>
    <name type="common">Mouse</name>
    <dbReference type="NCBI Taxonomy" id="10090"/>
    <lineage>
        <taxon>Eukaryota</taxon>
        <taxon>Metazoa</taxon>
        <taxon>Chordata</taxon>
        <taxon>Craniata</taxon>
        <taxon>Vertebrata</taxon>
        <taxon>Euteleostomi</taxon>
        <taxon>Mammalia</taxon>
        <taxon>Eutheria</taxon>
        <taxon>Euarchontoglires</taxon>
        <taxon>Glires</taxon>
        <taxon>Rodentia</taxon>
        <taxon>Myomorpha</taxon>
        <taxon>Muroidea</taxon>
        <taxon>Muridae</taxon>
        <taxon>Murinae</taxon>
        <taxon>Mus</taxon>
        <taxon>Mus</taxon>
    </lineage>
</organism>
<comment type="function">
    <text evidence="2 7 8 9 10 11 12">Multi-isomeric modular protein which forms a linking network between organelles and the actin cytoskeleton to maintain the subcellular spatial organization. As a component of the LINC (LInker of Nucleoskeleton and Cytoskeleton) complex involved in the connection between the nuclear lamina and the cytoskeleton. The nucleocytoplasmic interactions established by the LINC complex play an important role in the transmission of mechanical forces across the nuclear envelope and in nuclear movement and positioning. Specifically, SYNE2 and SUN2 assemble in arrays of transmembrane actin-associated nuclear (TAN) lines which are bound to F-actin cables and couple the nucleus to retrograde actin flow during actin-dependent nuclear movement. May be involved in nucleus-centrosome attachment. During interkinetic nuclear migration (INM) at G2 phase and nuclear migration in neural progenitors its LINC complex association with SUN1/2 and probable association with cytoplasmic dynein-dynactin motor complexes functions to pull the nucleus toward the centrosome; SYNE1 and SYNE2 seem to act redundantly in cerebellum, midbrain, brain stem, and other brain regions except cerebral cortex and hippocampus. During INM at G1 phase mediates respective LINC complex association with kinesin to push the nucleus away from the centrosome. Involved in nuclear migration in retinal photoreceptor progenitors. Required for centrosome migration to the apical cell surface during early ciliogenesis.</text>
</comment>
<comment type="subunit">
    <text evidence="2 8 9 10 11 12">Core component of LINC complexes which are composed of inner nuclear membrane SUN domain-containing proteins coupled to outer nuclear membrane KASH domain-containing nesprins. SUN and KASH domain-containing proteins seem to bind each other promiscuously; however, some LINC complex constituents are tissue- or cell type-specific. At least SUN1/2-containing core LINC complexes are proposed to be hexameric composed of three protomers of each KASH and SUN domain-containing protein. The SUN2:SYNE2/KASH2 complex is a heterohexamer; the homotrimeric cloverleave-like conformation of the SUN domain is a prerequisite for LINC complex formation in which three separate SYNE2/KASH2 peptides bind at the interface of adjacent SUN domains. Interacts with EMD, LMNA, MKS3 and F-actin via its N-terminal domain. Interacts with DCTN1 and DYNC1I1/2; suggesting the association with the dynein-dynactin motor complex. Associates with kinesin motor complexes. Interacts with TMEM67. Interacts (via KASH domain) with TMEM258 (By similarity). Interacts with BROX; this interaction promotes SYN2 ubiquitination and facilitates the relaxation of mechanical stress imposed by compressive actin fibers at the rupture site (By similarity).</text>
</comment>
<comment type="interaction">
    <interactant intactId="EBI-16108623">
        <id>Q6ZWQ0-1</id>
    </interactant>
    <interactant intactId="EBI-16189250">
        <id>Q8BJS4-3</id>
        <label>Sun2</label>
    </interactant>
    <organismsDiffer>false</organismsDiffer>
    <experiments>2</experiments>
</comment>
<comment type="interaction">
    <interactant intactId="EBI-16108623">
        <id>Q6ZWQ0-1</id>
    </interactant>
    <interactant intactId="EBI-348433">
        <id>Q9Y613</id>
        <label>FHOD1</label>
    </interactant>
    <organismsDiffer>true</organismsDiffer>
    <experiments>2</experiments>
</comment>
<comment type="subcellular location">
    <subcellularLocation>
        <location>Nucleus outer membrane</location>
        <topology>Single-pass type IV membrane protein</topology>
        <orientation>Cytoplasmic side</orientation>
    </subcellularLocation>
    <subcellularLocation>
        <location evidence="1">Sarcoplasmic reticulum membrane</location>
        <topology evidence="1">Single-pass type IV membrane protein</topology>
    </subcellularLocation>
    <subcellularLocation>
        <location>Cell membrane</location>
        <topology>Single-pass membrane protein</topology>
    </subcellularLocation>
    <subcellularLocation>
        <location>Cytoplasm</location>
        <location>Cytoskeleton</location>
    </subcellularLocation>
    <subcellularLocation>
        <location evidence="1">Mitochondrion</location>
    </subcellularLocation>
    <subcellularLocation>
        <location evidence="1">Nucleus</location>
        <location evidence="1">Nucleoplasm</location>
    </subcellularLocation>
    <text evidence="1">Different isoform patterns are found in the different compartments of the cell. The isoforms having the C-terminal transmembrane span can be found in several organellar membranes like the nuclear envelope, the sarcoplasmic reticulum of myoblasts, or the lamellipodia and focal adhesions at the cell membrane. The largest part of the outer nuclear membrane-associated protein is cytoplasmic, while its C-terminal part is associated with the nuclear envelope, most probably the outer nuclear membrane. Remains associated with the nuclear envelope during its breakdown in mitotic cells. Shorter soluble isoforms can be found in the cytoplasm and within the nucleus (By similarity).</text>
</comment>
<comment type="alternative products">
    <event type="alternative splicing"/>
    <isoform>
        <id>Q6ZWQ0-1</id>
        <name>1</name>
        <name>Nesprin-2 Giant</name>
        <name>Nesp2G</name>
        <name>NUANCE</name>
        <sequence type="displayed"/>
    </isoform>
    <isoform>
        <id>Q6ZWQ0-2</id>
        <name>2</name>
        <sequence type="described" ref="VSP_038800 VSP_038801"/>
    </isoform>
    <isoform>
        <id>Q6ZWQ0-3</id>
        <name>3</name>
        <sequence type="described" ref="VSP_038799 VSP_038802"/>
    </isoform>
</comment>
<comment type="tissue specificity">
    <text evidence="7">C-terminal isoforms are highly expressed in the brain, hert and skeletal muscle. Isoform 1 (Nesprin-2 Giant) is most prevalent in the brain, skin, kidney and skeletal muscle.</text>
</comment>
<comment type="domain">
    <text evidence="1">The KASH domain, which contains a transmembrane domain, mediates the nuclear envelope targeting and is involved in the binding to SUN1 and SUN2 through recognition of their SUN domains.</text>
</comment>
<comment type="PTM">
    <text evidence="2">The disulfid bond with SUN2 is required for stability of the SUN2:SYNE2/KASH2 LINC complex under tensile forces though not required for the interaction.</text>
</comment>
<comment type="similarity">
    <text evidence="15">Belongs to the nesprin family.</text>
</comment>
<dbReference type="EMBL" id="AK052521">
    <property type="protein sequence ID" value="BAC35023.1"/>
    <property type="molecule type" value="mRNA"/>
</dbReference>
<dbReference type="EMBL" id="AC115714">
    <property type="status" value="NOT_ANNOTATED_CDS"/>
    <property type="molecule type" value="Genomic_DNA"/>
</dbReference>
<dbReference type="EMBL" id="AC159897">
    <property type="status" value="NOT_ANNOTATED_CDS"/>
    <property type="molecule type" value="Genomic_DNA"/>
</dbReference>
<dbReference type="EMBL" id="AC164121">
    <property type="status" value="NOT_ANNOTATED_CDS"/>
    <property type="molecule type" value="Genomic_DNA"/>
</dbReference>
<dbReference type="EMBL" id="AC166991">
    <property type="status" value="NOT_ANNOTATED_CDS"/>
    <property type="molecule type" value="Genomic_DNA"/>
</dbReference>
<dbReference type="EMBL" id="BC082586">
    <property type="protein sequence ID" value="AAH82586.1"/>
    <property type="molecule type" value="mRNA"/>
</dbReference>
<dbReference type="CCDS" id="CCDS49091.1">
    <molecule id="Q6ZWQ0-1"/>
</dbReference>
<dbReference type="RefSeq" id="NP_001005510.2">
    <molecule id="Q6ZWQ0-1"/>
    <property type="nucleotide sequence ID" value="NM_001005510.2"/>
</dbReference>
<dbReference type="SMR" id="Q6ZWQ0"/>
<dbReference type="BioGRID" id="235364">
    <property type="interactions" value="56"/>
</dbReference>
<dbReference type="DIP" id="DIP-61049N"/>
<dbReference type="FunCoup" id="Q6ZWQ0">
    <property type="interactions" value="1339"/>
</dbReference>
<dbReference type="IntAct" id="Q6ZWQ0">
    <property type="interactions" value="9"/>
</dbReference>
<dbReference type="MINT" id="Q6ZWQ0"/>
<dbReference type="STRING" id="10090.ENSMUSP00000047697"/>
<dbReference type="GlyGen" id="Q6ZWQ0">
    <property type="glycosylation" value="9 sites, 4 N-linked glycans (4 sites), 1 O-linked glycan (3 sites)"/>
</dbReference>
<dbReference type="iPTMnet" id="Q6ZWQ0"/>
<dbReference type="PhosphoSitePlus" id="Q6ZWQ0"/>
<dbReference type="SwissPalm" id="Q6ZWQ0"/>
<dbReference type="jPOST" id="Q6ZWQ0"/>
<dbReference type="PaxDb" id="10090-ENSMUSP00000047697"/>
<dbReference type="PeptideAtlas" id="Q6ZWQ0"/>
<dbReference type="ProteomicsDB" id="254736">
    <molecule id="Q6ZWQ0-1"/>
</dbReference>
<dbReference type="ProteomicsDB" id="254737">
    <molecule id="Q6ZWQ0-2"/>
</dbReference>
<dbReference type="ProteomicsDB" id="254738">
    <molecule id="Q6ZWQ0-3"/>
</dbReference>
<dbReference type="Pumba" id="Q6ZWQ0"/>
<dbReference type="Antibodypedia" id="189">
    <property type="antibodies" value="185 antibodies from 22 providers"/>
</dbReference>
<dbReference type="Ensembl" id="ENSMUST00000044217.16">
    <molecule id="Q6ZWQ0-1"/>
    <property type="protein sequence ID" value="ENSMUSP00000047697.10"/>
    <property type="gene ID" value="ENSMUSG00000063450.15"/>
</dbReference>
<dbReference type="GeneID" id="319565"/>
<dbReference type="KEGG" id="mmu:319565"/>
<dbReference type="UCSC" id="uc007nxm.1">
    <molecule id="Q6ZWQ0-2"/>
    <property type="organism name" value="mouse"/>
</dbReference>
<dbReference type="UCSC" id="uc007nxp.1">
    <molecule id="Q6ZWQ0-1"/>
    <property type="organism name" value="mouse"/>
</dbReference>
<dbReference type="UCSC" id="uc007nxs.1">
    <molecule id="Q6ZWQ0-3"/>
    <property type="organism name" value="mouse"/>
</dbReference>
<dbReference type="AGR" id="MGI:2449316"/>
<dbReference type="CTD" id="23224"/>
<dbReference type="MGI" id="MGI:2449316">
    <property type="gene designation" value="Syne2"/>
</dbReference>
<dbReference type="VEuPathDB" id="HostDB:ENSMUSG00000063450"/>
<dbReference type="eggNOG" id="KOG0516">
    <property type="taxonomic scope" value="Eukaryota"/>
</dbReference>
<dbReference type="GeneTree" id="ENSGT00940000154656"/>
<dbReference type="InParanoid" id="Q6ZWQ0"/>
<dbReference type="OMA" id="GKDHKSP"/>
<dbReference type="OrthoDB" id="18853at2759"/>
<dbReference type="PhylomeDB" id="Q6ZWQ0"/>
<dbReference type="TreeFam" id="TF329280"/>
<dbReference type="BioGRID-ORCS" id="319565">
    <property type="hits" value="5 hits in 77 CRISPR screens"/>
</dbReference>
<dbReference type="ChiTaRS" id="Syne2">
    <property type="organism name" value="mouse"/>
</dbReference>
<dbReference type="PRO" id="PR:Q6ZWQ0"/>
<dbReference type="Proteomes" id="UP000000589">
    <property type="component" value="Chromosome 12"/>
</dbReference>
<dbReference type="RNAct" id="Q6ZWQ0">
    <property type="molecule type" value="protein"/>
</dbReference>
<dbReference type="Bgee" id="ENSMUSG00000063450">
    <property type="expression patterns" value="Expressed in ventricular zone and 262 other cell types or tissues"/>
</dbReference>
<dbReference type="ExpressionAtlas" id="Q6ZWQ0">
    <property type="expression patterns" value="baseline and differential"/>
</dbReference>
<dbReference type="GO" id="GO:0005929">
    <property type="term" value="C:cilium"/>
    <property type="evidence" value="ECO:0007669"/>
    <property type="project" value="Ensembl"/>
</dbReference>
<dbReference type="GO" id="GO:0001650">
    <property type="term" value="C:fibrillar center"/>
    <property type="evidence" value="ECO:0007669"/>
    <property type="project" value="Ensembl"/>
</dbReference>
<dbReference type="GO" id="GO:0031527">
    <property type="term" value="C:filopodium membrane"/>
    <property type="evidence" value="ECO:0007669"/>
    <property type="project" value="Ensembl"/>
</dbReference>
<dbReference type="GO" id="GO:0005925">
    <property type="term" value="C:focal adhesion"/>
    <property type="evidence" value="ECO:0007669"/>
    <property type="project" value="Ensembl"/>
</dbReference>
<dbReference type="GO" id="GO:0045111">
    <property type="term" value="C:intermediate filament cytoskeleton"/>
    <property type="evidence" value="ECO:0007669"/>
    <property type="project" value="Ensembl"/>
</dbReference>
<dbReference type="GO" id="GO:0031258">
    <property type="term" value="C:lamellipodium membrane"/>
    <property type="evidence" value="ECO:0007669"/>
    <property type="project" value="Ensembl"/>
</dbReference>
<dbReference type="GO" id="GO:0034993">
    <property type="term" value="C:meiotic nuclear membrane microtubule tethering complex"/>
    <property type="evidence" value="ECO:0007669"/>
    <property type="project" value="Ensembl"/>
</dbReference>
<dbReference type="GO" id="GO:0005739">
    <property type="term" value="C:mitochondrion"/>
    <property type="evidence" value="ECO:0007669"/>
    <property type="project" value="UniProtKB-SubCell"/>
</dbReference>
<dbReference type="GO" id="GO:0030016">
    <property type="term" value="C:myofibril"/>
    <property type="evidence" value="ECO:0000314"/>
    <property type="project" value="MGI"/>
</dbReference>
<dbReference type="GO" id="GO:0005635">
    <property type="term" value="C:nuclear envelope"/>
    <property type="evidence" value="ECO:0000314"/>
    <property type="project" value="WormBase"/>
</dbReference>
<dbReference type="GO" id="GO:0031965">
    <property type="term" value="C:nuclear membrane"/>
    <property type="evidence" value="ECO:0000314"/>
    <property type="project" value="MGI"/>
</dbReference>
<dbReference type="GO" id="GO:0005640">
    <property type="term" value="C:nuclear outer membrane"/>
    <property type="evidence" value="ECO:0007669"/>
    <property type="project" value="UniProtKB-SubCell"/>
</dbReference>
<dbReference type="GO" id="GO:0005654">
    <property type="term" value="C:nucleoplasm"/>
    <property type="evidence" value="ECO:0007669"/>
    <property type="project" value="UniProtKB-SubCell"/>
</dbReference>
<dbReference type="GO" id="GO:0033017">
    <property type="term" value="C:sarcoplasmic reticulum membrane"/>
    <property type="evidence" value="ECO:0007669"/>
    <property type="project" value="UniProtKB-SubCell"/>
</dbReference>
<dbReference type="GO" id="GO:0030018">
    <property type="term" value="C:Z disc"/>
    <property type="evidence" value="ECO:0000314"/>
    <property type="project" value="MGI"/>
</dbReference>
<dbReference type="GO" id="GO:0003779">
    <property type="term" value="F:actin binding"/>
    <property type="evidence" value="ECO:0000314"/>
    <property type="project" value="UniProtKB"/>
</dbReference>
<dbReference type="GO" id="GO:0140444">
    <property type="term" value="F:cytoskeleton-nuclear membrane anchor activity"/>
    <property type="evidence" value="ECO:0007669"/>
    <property type="project" value="Ensembl"/>
</dbReference>
<dbReference type="GO" id="GO:0051642">
    <property type="term" value="P:centrosome localization"/>
    <property type="evidence" value="ECO:0000315"/>
    <property type="project" value="UniProtKB"/>
</dbReference>
<dbReference type="GO" id="GO:0007163">
    <property type="term" value="P:establishment or maintenance of cell polarity"/>
    <property type="evidence" value="ECO:0000315"/>
    <property type="project" value="MGI"/>
</dbReference>
<dbReference type="GO" id="GO:0010761">
    <property type="term" value="P:fibroblast migration"/>
    <property type="evidence" value="ECO:0000315"/>
    <property type="project" value="MGI"/>
</dbReference>
<dbReference type="GO" id="GO:0006998">
    <property type="term" value="P:nuclear envelope organization"/>
    <property type="evidence" value="ECO:0000315"/>
    <property type="project" value="MGI"/>
</dbReference>
<dbReference type="GO" id="GO:0031022">
    <property type="term" value="P:nuclear migration along microfilament"/>
    <property type="evidence" value="ECO:0000315"/>
    <property type="project" value="UniProtKB"/>
</dbReference>
<dbReference type="GO" id="GO:0021817">
    <property type="term" value="P:nucleokinesis involved in cell motility in cerebral cortex radial glia guided migration"/>
    <property type="evidence" value="ECO:0000315"/>
    <property type="project" value="UniProtKB"/>
</dbReference>
<dbReference type="GO" id="GO:0030335">
    <property type="term" value="P:positive regulation of cell migration"/>
    <property type="evidence" value="ECO:0000315"/>
    <property type="project" value="UniProtKB"/>
</dbReference>
<dbReference type="GO" id="GO:0034504">
    <property type="term" value="P:protein localization to nucleus"/>
    <property type="evidence" value="ECO:0000315"/>
    <property type="project" value="MGI"/>
</dbReference>
<dbReference type="GO" id="GO:1902017">
    <property type="term" value="P:regulation of cilium assembly"/>
    <property type="evidence" value="ECO:0000315"/>
    <property type="project" value="UniProtKB"/>
</dbReference>
<dbReference type="CDD" id="cd21242">
    <property type="entry name" value="CH_SYNE2_rpt1"/>
    <property type="match status" value="1"/>
</dbReference>
<dbReference type="CDD" id="cd21244">
    <property type="entry name" value="CH_SYNE2_rpt2"/>
    <property type="match status" value="1"/>
</dbReference>
<dbReference type="CDD" id="cd00176">
    <property type="entry name" value="SPEC"/>
    <property type="match status" value="4"/>
</dbReference>
<dbReference type="FunFam" id="1.20.58.60:FF:000041">
    <property type="entry name" value="Nesprin-1 isoform 1"/>
    <property type="match status" value="1"/>
</dbReference>
<dbReference type="FunFam" id="1.20.58.60:FF:000073">
    <property type="entry name" value="Nesprin-1 isoform 1"/>
    <property type="match status" value="1"/>
</dbReference>
<dbReference type="FunFam" id="1.20.58.60:FF:000394">
    <property type="entry name" value="Nesprin-2"/>
    <property type="match status" value="1"/>
</dbReference>
<dbReference type="FunFam" id="1.10.418.10:FF:000050">
    <property type="entry name" value="nesprin-2 isoform X2"/>
    <property type="match status" value="1"/>
</dbReference>
<dbReference type="FunFam" id="1.20.58.60:FF:000115">
    <property type="entry name" value="nesprin-2 isoform X2"/>
    <property type="match status" value="1"/>
</dbReference>
<dbReference type="FunFam" id="1.20.58.60:FF:000133">
    <property type="entry name" value="nesprin-2 isoform X2"/>
    <property type="match status" value="1"/>
</dbReference>
<dbReference type="FunFam" id="1.10.418.10:FF:000053">
    <property type="entry name" value="nesprin-2 isoform X3"/>
    <property type="match status" value="1"/>
</dbReference>
<dbReference type="FunFam" id="1.20.58.60:FF:000173">
    <property type="entry name" value="Spectrin repeat containing nuclear envelope protein 2"/>
    <property type="match status" value="1"/>
</dbReference>
<dbReference type="FunFam" id="1.20.58.60:FF:000180">
    <property type="entry name" value="Spectrin repeat containing nuclear envelope protein 2"/>
    <property type="match status" value="1"/>
</dbReference>
<dbReference type="FunFam" id="1.20.58.60:FF:000174">
    <property type="entry name" value="Spectrin repeat-containing, nuclear envelope 2"/>
    <property type="match status" value="1"/>
</dbReference>
<dbReference type="FunFam" id="1.20.58.60:FF:000217">
    <property type="entry name" value="Synaptic nuclear envelope 2"/>
    <property type="match status" value="1"/>
</dbReference>
<dbReference type="Gene3D" id="1.20.58.60">
    <property type="match status" value="13"/>
</dbReference>
<dbReference type="Gene3D" id="1.10.418.10">
    <property type="entry name" value="Calponin-like domain"/>
    <property type="match status" value="2"/>
</dbReference>
<dbReference type="InterPro" id="IPR001589">
    <property type="entry name" value="Actinin_actin-bd_CS"/>
</dbReference>
<dbReference type="InterPro" id="IPR001715">
    <property type="entry name" value="CH_dom"/>
</dbReference>
<dbReference type="InterPro" id="IPR036872">
    <property type="entry name" value="CH_dom_sf"/>
</dbReference>
<dbReference type="InterPro" id="IPR012315">
    <property type="entry name" value="KASH"/>
</dbReference>
<dbReference type="InterPro" id="IPR018159">
    <property type="entry name" value="Spectrin/alpha-actinin"/>
</dbReference>
<dbReference type="InterPro" id="IPR002017">
    <property type="entry name" value="Spectrin_repeat"/>
</dbReference>
<dbReference type="InterPro" id="IPR057057">
    <property type="entry name" value="Spectrin_SYNE1"/>
</dbReference>
<dbReference type="InterPro" id="IPR056887">
    <property type="entry name" value="SYNE1/2_dom"/>
</dbReference>
<dbReference type="PANTHER" id="PTHR14514:SF4">
    <property type="entry name" value="NESPRIN-2"/>
    <property type="match status" value="1"/>
</dbReference>
<dbReference type="PANTHER" id="PTHR14514">
    <property type="entry name" value="PKA ANCHORING PROTEIN"/>
    <property type="match status" value="1"/>
</dbReference>
<dbReference type="Pfam" id="PF00307">
    <property type="entry name" value="CH"/>
    <property type="match status" value="2"/>
</dbReference>
<dbReference type="Pfam" id="PF10541">
    <property type="entry name" value="KASH"/>
    <property type="match status" value="1"/>
</dbReference>
<dbReference type="Pfam" id="PF00435">
    <property type="entry name" value="Spectrin"/>
    <property type="match status" value="2"/>
</dbReference>
<dbReference type="Pfam" id="PF25034">
    <property type="entry name" value="Spectrin_SYNE1"/>
    <property type="match status" value="1"/>
</dbReference>
<dbReference type="Pfam" id="PF25035">
    <property type="entry name" value="SYNE1"/>
    <property type="match status" value="1"/>
</dbReference>
<dbReference type="SMART" id="SM00033">
    <property type="entry name" value="CH"/>
    <property type="match status" value="2"/>
</dbReference>
<dbReference type="SMART" id="SM01249">
    <property type="entry name" value="KASH"/>
    <property type="match status" value="1"/>
</dbReference>
<dbReference type="SMART" id="SM00150">
    <property type="entry name" value="SPEC"/>
    <property type="match status" value="17"/>
</dbReference>
<dbReference type="SUPFAM" id="SSF47576">
    <property type="entry name" value="Calponin-homology domain, CH-domain"/>
    <property type="match status" value="1"/>
</dbReference>
<dbReference type="SUPFAM" id="SSF46966">
    <property type="entry name" value="Spectrin repeat"/>
    <property type="match status" value="20"/>
</dbReference>
<dbReference type="PROSITE" id="PS00019">
    <property type="entry name" value="ACTININ_1"/>
    <property type="match status" value="1"/>
</dbReference>
<dbReference type="PROSITE" id="PS00020">
    <property type="entry name" value="ACTININ_2"/>
    <property type="match status" value="1"/>
</dbReference>
<dbReference type="PROSITE" id="PS50021">
    <property type="entry name" value="CH"/>
    <property type="match status" value="2"/>
</dbReference>
<dbReference type="PROSITE" id="PS51049">
    <property type="entry name" value="KASH"/>
    <property type="match status" value="1"/>
</dbReference>
<gene>
    <name evidence="16" type="primary">Syne2</name>
</gene>
<sequence length="6874" mass="782725">MAASPVLPTEDGEGFLGIDDLHFSLQAEQEDTQKKTFTCWINSQLAKHTPPSVVSDLFADIKKGHVLLDLLEVLSGQQLPRDKGSNTFQCRINIEHALTFLKNRSIKLINIHVADIVEGNPSIILGLIWTIILHFHIEKLAQTLSCDYNQPSPEVVSVAASSPTSSPPTKKCSKAQAQARWQWSAKKALLQWAQEQCARSESVNVTDFKSSWRNGMAFLAVIHALRPDLIDMDSMRHRSNKDNLKEAFRIAEHELKIPKLLEPEDVDVVNPDEKSIMTYVAQFLKYSKDAPGPGDSTQAKVRDALVWLTLQEKRFQKMLKDSASETYCNKYHSLLSFMESLNEEKESFIDVLSLKGRMGELNEDESRLRQGWTSLMHQVAAWRAQLDDALPSPLKETEAWLKDIEGVVQEGVPTSQSYSEARTLIQGKLSSFKSLMGSFDYHSDVLMAFQSNAEKSLPAVPPVKLEEMTRRINNVLGKNFIPLLEFHDSKCSVLALLDEAKAKLDVWNGTYESKESVEVLLEDWHKFTGEKKFLIQLDASFQKCEEMYKNSARECESIREEYMMLEKNVHSCRQYIHNTKATLQRALMSWATFEEDLALLKASFDLTKKEQIKEVPVETLLQWNTKHTSLNEVGSFLIGVSSREVAASISKELRRLNKRWRKFITKTPLLKLPLVKIQDQPPGNSSGTSLSKESAMAAEPGGSRGEDVKAAEKQEVEDEESAGQLKVNEEVEGLIKQVTIWESQTKSILDLLQHGDHADGSSADTLQHLIAKGSVYEELLARTEDTLQMDVQSPSNLEPFQNVLRAGLQAKIQEAKQGVQITMVELSAVLKNLSDEPLELDLGLKVEEAQKELEVSILRAEQLLGQRERPGGFLLKYKEALEILNTNSLAKYLRAVEELKRTVPGGAKLQLEEQSRVASAKWEPLRHEISLYLQQLKIAIEEEKLRDNIARLEKQINKEKKLIRRGRTRGLRKEHEACLSPESIKCQLEHHVGVLRVLCEELTSPEDQQELKRALRDYEQKIARLLKCASEIHTTLQSSQGGALEERSALITTENGRRDADGEVPLEIPDNQLSTEKAMEPIKNFSQTSELKPQQEESIMEKEGKDCSASLSDLQERYDTQRGLLEQHLQDSKSRVTSDFASEQERSSACLQSKLAELQVLLADTDAHWEKFEITSLNLRRLMSDAEKPVLNQERDLLKGNEQVLHGLLNTRMESLEMALQIVLPLEKECSLLCASDLPLCTVAVQDLHPVEIDGVYQNLRDIRDSIAKQIRVCTSLEEPSNSVPRELHTLDQCAIQDIVLKCRLQLETMNQKVEMREDALDALEGFLASLRAAKLSAELPADRPAPKAPEVLSEDILLMKEKAGPLDERLRTLGINIKDAEGGENTTCERLVGALSVNLVAMDGQSKEEGPPEDKKLLEACSSKNLELFKNIQDLQNQISKIGLKDPTAPAVKHRKKSLLRLDKDLDGLEEEKVRIQKIAGSLPRFKDGSEKNVIQQCEDTAALWESTKASVTESLEQCGSALELLRQYQNIKNNLTALIQKEEGIISQQASYMGKDNLKKKIAEIETVKEEFSDHLEVVDKINQICKNLQYHLNKMKTFEDPPFEKEANAIVDRWLDINEKTEEYGENLGRALALWDKLFIIKNNIDEWTEQILGKAESHELTEEDRGRLKEELKVLEEQSAEFSRRVADIQSLLQSNEKPLELQVMESSVLSKMKDVKTHVAGGSNSYAPSGSTAELREDLDQAKTQMGMTESLLNALSPSDSLEIFTKLEEIQQQIFQQKHSMTVLENQIGCLTPELSELKRQYASVSNLFNTKKNALQDHFATFLNEQCKNFNDWFSNVKTNLQECFEPPETKLSLEQRLQKLSDFLTLGGGNSKIQQVETVLQHVKMLLPKAHVKELDSWLRSQELELENMESICQARAGELNNSFQQLLRLEDDCRSLSKWLTNQEENWGKMEVSGERMDLFSQALTRKREQFETVAQLSDSLKEHGLTEGEETIKESTHLIDRYQALWRQLHEIEEEDKLPAAEDQSFNDLADDVIHWIKEIKESLMALNSSEGKMPLEERIQKIKEIIALKPEGDAKIQMVMRQAEHCEAPLAQETFTDLSNQWDSTLHLANTYLSHQEKLVLEGEKYLQSKEDLRLMLTELKKQQEAGFALQPGLPEKQAQLKIYKKFLQKAQDLTSLLEELKSQGNYLLECTKNPSFSEEPWLEVKHLHESLLQQLQDSVQKLEGHVQEHSSYQVCLTDLSSTLDDISKEYFSLCDGSKDQIMAKERMQKLQELESRLRFQGGALKKASALAKSIKQNTSSVGQKIIKDDIRSLKYKQKDLENRIESAKQETENGLNSILKSKSSTEKHVKFSLPVEEMPATSEVPKPTRESAAVGESGGARETNTNSAVEMILSKQLSLNVQESMQNAQDEREVNELQNQPLELDIMLRNEQLKGMEELSTHLEARRAAIELLEQSQHLNQTEEQALVLPAARPSVCHLGSLQQELHTLKKTKERQYGLLSGFQDQLVMAEASLNTSLAEVESLKIGSLDSATYLGKIKKFLGSVENQQGSLSKLRTEWAHLSSLLAAADQKLVESQMKHLEHGWELVEQLAHRKCFQQATEHSELTCLLEKLQDLKVSLHQQQQRLTLSLNSPGQQAAIVDMVTPAAELQAIKCEFSGLKWQAELHMKRLWGEKDKKTLEDAINNLNKQMEALEPLNREVENRIKKCELQNRIKETLSWVKNTMAELVVPIALLPDNILSQIRKCKLIHDGILGNQQAVELLVEEVRGITPSLAPCEGDGLNALLEDLQSQHQALLLKSTERSQQLELKLEEKSKLFAIIGKVQLTLEESETLMSPTGDRASTEAELERRLAILKASQQQLQDTESALSAHLQELTNAYKDANVFERLFLDDQLKNLKARTNRTQRFLQNNGSELKQKMESYREFHDKAAVLQKEAECILHGGLLPLRQELEQDAKEQLGNLRDKLAAIRGSLSQVLTSEEVFDTIGLSWDGSLLARLQTQVLEREREVEGKIKQLDTFLIARDRHQASISKIRAVDLQIKKGAESLLKVPSMSPESTLLNAQTLIQKIEKSKRLRDEIIRKLSKNEAFDDSFKESEMQRLKLCAEENSRLQEALQNMLLELQPREMGEKEFREKLENALHVLKQIQSRLQQPLCVNLGVQHIQHEKETWEAFGEQVEAEMCGLRAVRITEEQREENDSGTGGMEAKLRDIEGLHMELSKSISLRADVLNDAYDSANRYDELVAGALRIITSLEATLLSYRVDLHNPQKTLELAHLKQEELQSSVADLRSLTETLGAISSPEAKEQLRCTLEVLAAKNSALKAGLEAQEAEEERCLENYKCFRKMKEEICSRLRKMEMDLGQSIFPLPRSYKEALARLEQSKALTSNLLSTKEDLVKLRQLLRHLRCRSTENDATCALGVASALWEKWLSLLEAAREWQQWGGELKREWKFISEEIEREAIILETLQEDLPEISKTNAAPTEELWQLLDSLCQHQESVEKQQLLLALLLQRVRSIQNIPEGTETGETIPALQEIGSMQERCDRLLHTTRKNKDLVQAEIQAQQSFLKEIKDVKRVFEQISTSFPNLAPEGHPERAEQFEELRSILQKGKLSFENIMEKLRIKYSEMYSIVPAEIGSQVEECRSALEDAEEKMSSEVSKSSPSSIMRRKIERINNGLHCVEKMLQQKSRNIEEAHEIQKKIWDELDLWHSKLNELDSEVQDFVEQDPGQAQEWMDNLMAPFQQHQQVSQRAESRTSQLNKATIKMEEYNDLLKSTEVWIEKTSCLLANPACYDSSRTLSHRASTLQMALEDSEQKHSLLHSIFTDLEDLSIIFETDDLIQTIHELSDQVAALQQQIMEALPHVQQVADDVVAIESEVKAMEKKVAKIKAILLSKEIFDFPPEEHLKHGEVILENIHPMKKTIAEIMTYQVELRLPQTGTKPLPVFQRTSQLLQDVKLLENVTQEQNELLKVVIKQTAECDEEIDSLKQMLTNYSAEISPEHVSQNQVADLPSLQGEMERLEKQILNLNQKKEDLLVDLKTAVLNLHEHLKQEQQEVGDKPSAGASECTVAERDASERKLSRTNSMSFLPVVKEEAEESSVKSEDGRRRTEPPSASWSFLGKHSKDLEGDGASSSSSATIVQDADGRISTCDSSMVHIIAPDSGSTEEGPAPSPRLSQTDEGATPPIEAALLDFPREQGAFESTVERSRPRPADILRVCKTQVAKLELWLQQANVAFEPETVDADMQQVVEEELAGCQAMLTEIEYKVASLLETCKDQGLGDCGTTQQEAEALSWKLKTVKCNLEKVQMVLQEKFSEDQHPSTLKKPSEPHDVDQPAGLSELDSVLTERPQFSRQKDAPQPQILELKPSEQKDLIKFTELNAKKTWLQGHQENEDANRQSASSSKVPSPGNAASDSTLPLQAQSGDKWQYLHHELTSRPNPSVPQLVEPQVALTTSTLPSVSVYNFRCPTADELQAYTTQLEELRQEANTIQTQGSMTEETYISLDKRLFELFLSLSRCLGSVEGLLQRPGLLREDACAQQVFFQKLALELKKLYLALGDKKDDFLKAVTWPGKEATLLPECIDALTVSLESVQSRAAWRDASLKAGLEHSRSYQNEVKRLYSQLIKKKTALQQSLNEISGQSISKQLQKADVHTAELQNSEKQVAKLRDEGERLRFPHGLLQDVYKLEDVLDSMWGILRARYLELSSPFLSKSLQTLLQGMAELVSIGKGKLAADPLQHAKSKAALQAQLQDHKAFFQKLVADMLLIQTYSATMFPPSLQKGEGFGAEQVAEVRALEEEACLRGAQLQSMLQKWEEFDDNYASLEKDLEALISSLPSVSLVEETEERLLERISFYQQIKRNIDGKHARLCQTLNEGRQLAASVSCPEPEGQIARLEEQWLSLNKRIDQELHRLQTLLKHLLSYSRDSDELTRWLETSQQTLNYWKEQSLNVSQDLNTIRSNIDRFFKFSKEVDERSSLKSAVMSTGNQLLHLKEADTATLRASLAQFEQKWTVLITQLPDIQEKLHQLQMEKLPSREAISEMISWMNAVEPQAAGKDTELSKSSASQVKHLLQKLKEFRMEMDYKQWVVDFVNQSLLQLSTCDVESKRYERTEFAEHLGEMNRQWQRVHGTLNRKIQHLEQLLESITENENKVQNLNSWLEAQEERLKMLQKPESAVSMEKLLLDCQDIENQLALKSKALDELRQSSLTMDGGDVPLLEDMASGIVELFQKKNNVTSQVHQLRASVQSVLQEWKACDKLYDEATMRTTQLTYSMEHSKPAVLSLQALACQVQNLEALQDEAENGERSWEKLQEVIGRLKASCPSMAGIIEEKCQDAHSRWTQVNQDLADQLQEARGQLQLWKAPHNAHAEAAAWLQQQEAKFQQLANTNLSGDNLADILPRALKDIKGLQSDLQKTKEAFLENSTLSDQLPQPEERSTPGLHSGQRHSLQTAAYLEKMLLAKSNEFEIVLAQFKDFTDRLAYSKDLIVHKEENLNKLYHEEKEEVPDLFLNHVLALTAQSPDIERLNEESLRLPLSDVTIKTLQSLNRQWIRATATALDHYSELQGNGLNEKFLHYCERWIQVLEKIQESLSVEVAHSLPALLEQQKTYEILEAEVSTNQAVADAYVTQSLQLLDTAEIEKRPEFVSEFSKLSDQWQRAARGVRQRKCDISRLVTQWRFFTTSVEDLLRFLADTSQLLSAVKEQDCYSLCQTRRLVHELKSKEIHLQRWRTTYALALEAGEKLRNTPSPETREFVDGQISRLQESWKDTELSLGEVISRLQSTAETWDQCKKKIKKLKKRLQALKAQSEDPLPELHEALHEEKELIKEVEKSLANWTHSLKELQTMKADLSQHILAEDVTVLKEQIQLLHRQWEDLCLRVAIRKQEIEDRLNSWIVFNEKNKELCAWLVQMENKVLQTADVSIEEMIEKLQKDCMEEISLFTENKLQLKQMGDQLIKASSKAKAAELEEKLSKINDRWQHLFDVIGSRVKKLKETFAFIQQLDKNMSNLRTWLARIESELSKPVVYDVCDNQEIQKRLAEQQDLQRDIEQHSAGVESVFNICDVLLHDSDACANETECDSIQQTTRSLDRRWRNICAMSMERRMKIEETWRLWQKFLDDYSRFEDWLKSAERTAACPNSSEVLYTNAKEELKRFEAFQRQIHERLTQLELINKQYRRLARENRTDTASKLKQMVHEGNQRWDNLQKRVTAILRRLRYFTNQREEFEGTRESILVWLTEMDLQLTNVEHFSESDAEDKMRQLNGFQQEITLNTNKIDQLIVFGEQLIQKSEPLDAVLIEDELEELHRYCQEVFGRVSRFHRRLTSHTPGLDDEKEASENETDIEDPREIQADSWRKRRESEEPTSPQSLCHLVPPALGHERSGCETPVSVDSIPLEWDHTGDVGGSSSHEDDEEGPFYSALSGKSISEGHPWHVPDSPSHSKHHYKHMEGDRTEAPVPTDASTPFKSDYVKLLLRQGTDDSKEGLKEAQQEDEQLATLTGQQPGAFDRWELIQAQELHSKLRLKQTVQQLKSDIGSIAAWLGKTEAELEALKLAEPPSDIQEIALRVKRLQEILKAFDTYKALMVSVNVSHKEYLPSQSPEATELQNRLHQLSLSWDSVQGVLDSWRGDLRQSLMQCQDFHQLSQDLLLWLATAESRRQKAHVTSPEADRQVLLECQKDLMRLEKELVARQPQVSSLREISSSLLVKGQGEDYIEAEEKVHVIEKKLKQLQEQVAQDLMSLQRSLDPDASLTSFDEVDSGEQLPAAFAKSPRPRWTFLEEEEEEEETDSRMPHLDSPGSSQPRRSFLSRVIRAALPLQLLLLLLLLLACLLPASEDDYSCTQANNFARSFYPMLRYTNGPPPT</sequence>
<evidence type="ECO:0000250" key="1"/>
<evidence type="ECO:0000250" key="2">
    <source>
        <dbReference type="UniProtKB" id="Q8WXH0"/>
    </source>
</evidence>
<evidence type="ECO:0000255" key="3"/>
<evidence type="ECO:0000255" key="4">
    <source>
        <dbReference type="PROSITE-ProRule" id="PRU00044"/>
    </source>
</evidence>
<evidence type="ECO:0000255" key="5">
    <source>
        <dbReference type="PROSITE-ProRule" id="PRU00385"/>
    </source>
</evidence>
<evidence type="ECO:0000256" key="6">
    <source>
        <dbReference type="SAM" id="MobiDB-lite"/>
    </source>
</evidence>
<evidence type="ECO:0000269" key="7">
    <source>
    </source>
</evidence>
<evidence type="ECO:0000269" key="8">
    <source>
    </source>
</evidence>
<evidence type="ECO:0000269" key="9">
    <source>
    </source>
</evidence>
<evidence type="ECO:0000269" key="10">
    <source>
    </source>
</evidence>
<evidence type="ECO:0000269" key="11">
    <source>
    </source>
</evidence>
<evidence type="ECO:0000269" key="12">
    <source>
    </source>
</evidence>
<evidence type="ECO:0000303" key="13">
    <source>
    </source>
</evidence>
<evidence type="ECO:0000303" key="14">
    <source>
    </source>
</evidence>
<evidence type="ECO:0000305" key="15"/>
<evidence type="ECO:0000312" key="16">
    <source>
        <dbReference type="MGI" id="MGI:2449316"/>
    </source>
</evidence>
<evidence type="ECO:0007744" key="17">
    <source>
    </source>
</evidence>
<protein>
    <recommendedName>
        <fullName evidence="15">Nesprin-2</fullName>
    </recommendedName>
    <alternativeName>
        <fullName>KASH domain-containing protein 2</fullName>
        <shortName>KASH2</shortName>
    </alternativeName>
    <alternativeName>
        <fullName>Nuclear envelope spectrin repeat protein 2</fullName>
    </alternativeName>
    <alternativeName>
        <fullName>Nucleus and actin connecting element protein</fullName>
        <shortName>Protein NUANCE</shortName>
    </alternativeName>
    <alternativeName>
        <fullName>Synaptic nuclear envelope protein 2</fullName>
        <shortName>Syne-2</shortName>
    </alternativeName>
</protein>
<accession>Q6ZWQ0</accession>
<accession>Q640M5</accession>
<proteinExistence type="evidence at protein level"/>
<reference key="1">
    <citation type="journal article" date="2005" name="Science">
        <title>The transcriptional landscape of the mammalian genome.</title>
        <authorList>
            <person name="Carninci P."/>
            <person name="Kasukawa T."/>
            <person name="Katayama S."/>
            <person name="Gough J."/>
            <person name="Frith M.C."/>
            <person name="Maeda N."/>
            <person name="Oyama R."/>
            <person name="Ravasi T."/>
            <person name="Lenhard B."/>
            <person name="Wells C."/>
            <person name="Kodzius R."/>
            <person name="Shimokawa K."/>
            <person name="Bajic V.B."/>
            <person name="Brenner S.E."/>
            <person name="Batalov S."/>
            <person name="Forrest A.R."/>
            <person name="Zavolan M."/>
            <person name="Davis M.J."/>
            <person name="Wilming L.G."/>
            <person name="Aidinis V."/>
            <person name="Allen J.E."/>
            <person name="Ambesi-Impiombato A."/>
            <person name="Apweiler R."/>
            <person name="Aturaliya R.N."/>
            <person name="Bailey T.L."/>
            <person name="Bansal M."/>
            <person name="Baxter L."/>
            <person name="Beisel K.W."/>
            <person name="Bersano T."/>
            <person name="Bono H."/>
            <person name="Chalk A.M."/>
            <person name="Chiu K.P."/>
            <person name="Choudhary V."/>
            <person name="Christoffels A."/>
            <person name="Clutterbuck D.R."/>
            <person name="Crowe M.L."/>
            <person name="Dalla E."/>
            <person name="Dalrymple B.P."/>
            <person name="de Bono B."/>
            <person name="Della Gatta G."/>
            <person name="di Bernardo D."/>
            <person name="Down T."/>
            <person name="Engstrom P."/>
            <person name="Fagiolini M."/>
            <person name="Faulkner G."/>
            <person name="Fletcher C.F."/>
            <person name="Fukushima T."/>
            <person name="Furuno M."/>
            <person name="Futaki S."/>
            <person name="Gariboldi M."/>
            <person name="Georgii-Hemming P."/>
            <person name="Gingeras T.R."/>
            <person name="Gojobori T."/>
            <person name="Green R.E."/>
            <person name="Gustincich S."/>
            <person name="Harbers M."/>
            <person name="Hayashi Y."/>
            <person name="Hensch T.K."/>
            <person name="Hirokawa N."/>
            <person name="Hill D."/>
            <person name="Huminiecki L."/>
            <person name="Iacono M."/>
            <person name="Ikeo K."/>
            <person name="Iwama A."/>
            <person name="Ishikawa T."/>
            <person name="Jakt M."/>
            <person name="Kanapin A."/>
            <person name="Katoh M."/>
            <person name="Kawasawa Y."/>
            <person name="Kelso J."/>
            <person name="Kitamura H."/>
            <person name="Kitano H."/>
            <person name="Kollias G."/>
            <person name="Krishnan S.P."/>
            <person name="Kruger A."/>
            <person name="Kummerfeld S.K."/>
            <person name="Kurochkin I.V."/>
            <person name="Lareau L.F."/>
            <person name="Lazarevic D."/>
            <person name="Lipovich L."/>
            <person name="Liu J."/>
            <person name="Liuni S."/>
            <person name="McWilliam S."/>
            <person name="Madan Babu M."/>
            <person name="Madera M."/>
            <person name="Marchionni L."/>
            <person name="Matsuda H."/>
            <person name="Matsuzawa S."/>
            <person name="Miki H."/>
            <person name="Mignone F."/>
            <person name="Miyake S."/>
            <person name="Morris K."/>
            <person name="Mottagui-Tabar S."/>
            <person name="Mulder N."/>
            <person name="Nakano N."/>
            <person name="Nakauchi H."/>
            <person name="Ng P."/>
            <person name="Nilsson R."/>
            <person name="Nishiguchi S."/>
            <person name="Nishikawa S."/>
            <person name="Nori F."/>
            <person name="Ohara O."/>
            <person name="Okazaki Y."/>
            <person name="Orlando V."/>
            <person name="Pang K.C."/>
            <person name="Pavan W.J."/>
            <person name="Pavesi G."/>
            <person name="Pesole G."/>
            <person name="Petrovsky N."/>
            <person name="Piazza S."/>
            <person name="Reed J."/>
            <person name="Reid J.F."/>
            <person name="Ring B.Z."/>
            <person name="Ringwald M."/>
            <person name="Rost B."/>
            <person name="Ruan Y."/>
            <person name="Salzberg S.L."/>
            <person name="Sandelin A."/>
            <person name="Schneider C."/>
            <person name="Schoenbach C."/>
            <person name="Sekiguchi K."/>
            <person name="Semple C.A."/>
            <person name="Seno S."/>
            <person name="Sessa L."/>
            <person name="Sheng Y."/>
            <person name="Shibata Y."/>
            <person name="Shimada H."/>
            <person name="Shimada K."/>
            <person name="Silva D."/>
            <person name="Sinclair B."/>
            <person name="Sperling S."/>
            <person name="Stupka E."/>
            <person name="Sugiura K."/>
            <person name="Sultana R."/>
            <person name="Takenaka Y."/>
            <person name="Taki K."/>
            <person name="Tammoja K."/>
            <person name="Tan S.L."/>
            <person name="Tang S."/>
            <person name="Taylor M.S."/>
            <person name="Tegner J."/>
            <person name="Teichmann S.A."/>
            <person name="Ueda H.R."/>
            <person name="van Nimwegen E."/>
            <person name="Verardo R."/>
            <person name="Wei C.L."/>
            <person name="Yagi K."/>
            <person name="Yamanishi H."/>
            <person name="Zabarovsky E."/>
            <person name="Zhu S."/>
            <person name="Zimmer A."/>
            <person name="Hide W."/>
            <person name="Bult C."/>
            <person name="Grimmond S.M."/>
            <person name="Teasdale R.D."/>
            <person name="Liu E.T."/>
            <person name="Brusic V."/>
            <person name="Quackenbush J."/>
            <person name="Wahlestedt C."/>
            <person name="Mattick J.S."/>
            <person name="Hume D.A."/>
            <person name="Kai C."/>
            <person name="Sasaki D."/>
            <person name="Tomaru Y."/>
            <person name="Fukuda S."/>
            <person name="Kanamori-Katayama M."/>
            <person name="Suzuki M."/>
            <person name="Aoki J."/>
            <person name="Arakawa T."/>
            <person name="Iida J."/>
            <person name="Imamura K."/>
            <person name="Itoh M."/>
            <person name="Kato T."/>
            <person name="Kawaji H."/>
            <person name="Kawagashira N."/>
            <person name="Kawashima T."/>
            <person name="Kojima M."/>
            <person name="Kondo S."/>
            <person name="Konno H."/>
            <person name="Nakano K."/>
            <person name="Ninomiya N."/>
            <person name="Nishio T."/>
            <person name="Okada M."/>
            <person name="Plessy C."/>
            <person name="Shibata K."/>
            <person name="Shiraki T."/>
            <person name="Suzuki S."/>
            <person name="Tagami M."/>
            <person name="Waki K."/>
            <person name="Watahiki A."/>
            <person name="Okamura-Oho Y."/>
            <person name="Suzuki H."/>
            <person name="Kawai J."/>
            <person name="Hayashizaki Y."/>
        </authorList>
    </citation>
    <scope>NUCLEOTIDE SEQUENCE [LARGE SCALE MRNA] (ISOFORM 2)</scope>
    <source>
        <strain>C57BL/6J</strain>
        <tissue>Lung</tissue>
    </source>
</reference>
<reference key="2">
    <citation type="journal article" date="2009" name="PLoS Biol.">
        <title>Lineage-specific biology revealed by a finished genome assembly of the mouse.</title>
        <authorList>
            <person name="Church D.M."/>
            <person name="Goodstadt L."/>
            <person name="Hillier L.W."/>
            <person name="Zody M.C."/>
            <person name="Goldstein S."/>
            <person name="She X."/>
            <person name="Bult C.J."/>
            <person name="Agarwala R."/>
            <person name="Cherry J.L."/>
            <person name="DiCuccio M."/>
            <person name="Hlavina W."/>
            <person name="Kapustin Y."/>
            <person name="Meric P."/>
            <person name="Maglott D."/>
            <person name="Birtle Z."/>
            <person name="Marques A.C."/>
            <person name="Graves T."/>
            <person name="Zhou S."/>
            <person name="Teague B."/>
            <person name="Potamousis K."/>
            <person name="Churas C."/>
            <person name="Place M."/>
            <person name="Herschleb J."/>
            <person name="Runnheim R."/>
            <person name="Forrest D."/>
            <person name="Amos-Landgraf J."/>
            <person name="Schwartz D.C."/>
            <person name="Cheng Z."/>
            <person name="Lindblad-Toh K."/>
            <person name="Eichler E.E."/>
            <person name="Ponting C.P."/>
        </authorList>
    </citation>
    <scope>NUCLEOTIDE SEQUENCE [LARGE SCALE GENOMIC DNA]</scope>
    <source>
        <strain>C57BL/6J</strain>
    </source>
</reference>
<reference key="3">
    <citation type="journal article" date="2004" name="Genome Res.">
        <title>The status, quality, and expansion of the NIH full-length cDNA project: the Mammalian Gene Collection (MGC).</title>
        <authorList>
            <consortium name="The MGC Project Team"/>
        </authorList>
    </citation>
    <scope>NUCLEOTIDE SEQUENCE [LARGE SCALE MRNA] (ISOFORM 3)</scope>
    <source>
        <strain>C57BL/6J</strain>
        <tissue>Eye</tissue>
    </source>
</reference>
<reference key="4">
    <citation type="journal article" date="2008" name="J. Cell Sci.">
        <title>Nesprin-2 Giant (NUANCE) maintains nuclear envelope architecture and composition in skin.</title>
        <authorList>
            <person name="Luke Y."/>
            <person name="Zaim H."/>
            <person name="Karakesisoglou I."/>
            <person name="Jaeger V.M."/>
            <person name="Sellin L."/>
            <person name="Lu W."/>
            <person name="Schneider M."/>
            <person name="Neumann S."/>
            <person name="Beijer A."/>
            <person name="Munck M."/>
            <person name="Padmakumar V.C."/>
            <person name="Gloy J."/>
            <person name="Walz G."/>
            <person name="Noegel A.A."/>
        </authorList>
    </citation>
    <scope>TISSUE SPECIFICITY</scope>
    <scope>SUBCELLULAR LOCATION</scope>
    <scope>FUNCTION</scope>
</reference>
<reference key="5">
    <citation type="journal article" date="2009" name="J. Cell Sci.">
        <title>Nesprin-2 interacts with meckelin and mediates ciliogenesis via remodelling of the actin cytoskeleton.</title>
        <authorList>
            <person name="Dawe H.R."/>
            <person name="Adams M."/>
            <person name="Wheway G."/>
            <person name="Szymanska K."/>
            <person name="Logan C.V."/>
            <person name="Noegel A.A."/>
            <person name="Gull K."/>
            <person name="Johnson C.A."/>
        </authorList>
    </citation>
    <scope>SUBCELLULAR LOCATION</scope>
    <scope>INTERACTION WITH TMEM67</scope>
    <scope>FUNCTION</scope>
</reference>
<reference key="6">
    <citation type="journal article" date="2009" name="Neuron">
        <title>SUN1/2 and Syne/Nesprin-1/2 complexes connect centrosome to the nucleus during neurogenesis and neuronal migration in mice.</title>
        <authorList>
            <person name="Zhang X."/>
            <person name="Lei K."/>
            <person name="Yuan X."/>
            <person name="Wu X."/>
            <person name="Zhuang Y."/>
            <person name="Xu T."/>
            <person name="Xu R."/>
            <person name="Han M."/>
        </authorList>
    </citation>
    <scope>FUNCTION</scope>
    <scope>SUBUNIT</scope>
</reference>
<reference key="7">
    <citation type="journal article" date="2010" name="Cell">
        <title>A tissue-specific atlas of mouse protein phosphorylation and expression.</title>
        <authorList>
            <person name="Huttlin E.L."/>
            <person name="Jedrychowski M.P."/>
            <person name="Elias J.E."/>
            <person name="Goswami T."/>
            <person name="Rad R."/>
            <person name="Beausoleil S.A."/>
            <person name="Villen J."/>
            <person name="Haas W."/>
            <person name="Sowa M.E."/>
            <person name="Gygi S.P."/>
        </authorList>
    </citation>
    <scope>PHOSPHORYLATION [LARGE SCALE ANALYSIS] AT SER-4096; SER-6371; SER-6400; SER-6417; SER-6418 AND SER-6419</scope>
    <scope>IDENTIFICATION BY MASS SPECTROMETRY [LARGE SCALE ANALYSIS]</scope>
    <source>
        <tissue>Brown adipose tissue</tissue>
        <tissue>Heart</tissue>
        <tissue>Kidney</tissue>
        <tissue>Liver</tissue>
        <tissue>Lung</tissue>
        <tissue>Spleen</tissue>
        <tissue>Testis</tissue>
    </source>
</reference>
<reference key="8">
    <citation type="journal article" date="2010" name="Science">
        <title>Linear arrays of nuclear envelope proteins harness retrograde actin flow for nuclear movement.</title>
        <authorList>
            <person name="Luxton G.W."/>
            <person name="Gomes E.R."/>
            <person name="Folker E.S."/>
            <person name="Vintinner E."/>
            <person name="Gundersen G.G."/>
        </authorList>
    </citation>
    <scope>FUNCTION</scope>
    <scope>INTERACTION WITH F-ACTIN</scope>
    <scope>MUTAGENESIS OF ILE-128 AND ILE-131</scope>
</reference>
<reference key="9">
    <citation type="journal article" date="2011" name="Hum. Mol. Genet.">
        <title>KASH protein Syne-2/Nesprin-2 and SUN proteins SUN1/2 mediate nuclear migration during mammalian retinal development.</title>
        <authorList>
            <person name="Yu J."/>
            <person name="Lei K."/>
            <person name="Zhou M."/>
            <person name="Craft C.M."/>
            <person name="Xu G."/>
            <person name="Xu T."/>
            <person name="Zhuang Y."/>
            <person name="Xu R."/>
            <person name="Han M."/>
        </authorList>
    </citation>
    <scope>FUNCTION</scope>
    <scope>SUBUNIT</scope>
</reference>
<reference key="10">
    <citation type="journal article" date="2012" name="PLoS ONE">
        <title>LINC complexes mediate the positioning of cone photoreceptor nuclei in mouse retina.</title>
        <authorList>
            <person name="Razafsky D."/>
            <person name="Blecher N."/>
            <person name="Markov A."/>
            <person name="Stewart-Hutchinson P.J."/>
            <person name="Hodzic D."/>
        </authorList>
    </citation>
    <scope>FUNCTION</scope>
    <scope>SUBUNIT</scope>
</reference>